<name>UT2_RAT</name>
<comment type="function">
    <molecule>Isoform 1</molecule>
    <text evidence="6 9">Mediates the transport of urea driven by a concentration gradient across the cell membrane of the kidney inner medullary collecting duct which is critical to the urinary concentrating mechanism.</text>
</comment>
<comment type="function">
    <molecule>Isoform 2</molecule>
    <text evidence="4 8">Mediates the transport of urea driven by a concentration gradient across the cell membrane of the kidney inner medullary collecting duct which is critical to the urinary concentrating mechanism.</text>
</comment>
<comment type="function">
    <molecule>Isoform 3</molecule>
    <text evidence="3 5">Mediates the transport of urea driven by a concentration gradient across the cell membrane of the kidney inner medullary collecting duct which is critical to the urinary concentrating mechanism.</text>
</comment>
<comment type="function">
    <molecule>Isoform 4</molecule>
    <text evidence="3">Mediates the transport of urea driven by a concentration gradient across the cell membrane of the kidney inner medullary collecting duct which is critical to the urinary concentrating mechanism.</text>
</comment>
<comment type="catalytic activity">
    <molecule>Isoform 1</molecule>
    <reaction evidence="6 9">
        <text>urea(in) = urea(out)</text>
        <dbReference type="Rhea" id="RHEA:32799"/>
        <dbReference type="ChEBI" id="CHEBI:16199"/>
    </reaction>
</comment>
<comment type="catalytic activity">
    <molecule>Isoform 2</molecule>
    <reaction evidence="4 8">
        <text>urea(in) = urea(out)</text>
        <dbReference type="Rhea" id="RHEA:32799"/>
        <dbReference type="ChEBI" id="CHEBI:16199"/>
    </reaction>
</comment>
<comment type="catalytic activity">
    <molecule>Isoform 3</molecule>
    <reaction evidence="3 5">
        <text>urea(in) = urea(out)</text>
        <dbReference type="Rhea" id="RHEA:32799"/>
        <dbReference type="ChEBI" id="CHEBI:16199"/>
    </reaction>
</comment>
<comment type="catalytic activity">
    <molecule>Isoform 4</molecule>
    <reaction evidence="3">
        <text>urea(in) = urea(out)</text>
        <dbReference type="Rhea" id="RHEA:32799"/>
        <dbReference type="ChEBI" id="CHEBI:16199"/>
    </reaction>
</comment>
<comment type="activity regulation">
    <molecule>Isoform 1</molecule>
    <text evidence="6 9">Inhibited by phloretin (PubMed:8958221). Activated by vasopressin, forskolin, 3-isobutyl-1-methylxanthine (IBMX) and cAMP (PubMed:16959825).</text>
</comment>
<comment type="activity regulation">
    <molecule>Isoform 2</molecule>
    <text evidence="4">Inhibited by phloretin.</text>
</comment>
<comment type="activity regulation">
    <molecule>Isoform 3</molecule>
    <text evidence="3 5">Inhibited by urea analogs and phloretin and activated by forskolin.</text>
</comment>
<comment type="activity regulation">
    <molecule>Isoform 4</molecule>
    <text evidence="3">Inhibited by phloretin and activated by forskolin.</text>
</comment>
<comment type="subunit">
    <molecule>Isoform 1</molecule>
    <text evidence="7">Interacts with SNAPIN which enhances its urea transport activity.</text>
</comment>
<comment type="interaction">
    <interactant intactId="EBI-1635608">
        <id>Q62668-1</id>
    </interactant>
    <interactant intactId="EBI-296723">
        <id>O95295</id>
        <label>SNAPIN</label>
    </interactant>
    <organismsDiffer>true</organismsDiffer>
    <experiments>6</experiments>
</comment>
<comment type="subcellular location">
    <molecule>Isoform 1</molecule>
    <subcellularLocation>
        <location evidence="6">Apical cell membrane</location>
        <topology evidence="1">Multi-pass membrane protein</topology>
    </subcellularLocation>
    <subcellularLocation>
        <location evidence="6">Cell membrane</location>
        <topology evidence="1">Multi-pass membrane protein</topology>
    </subcellularLocation>
    <text evidence="6">Vasopressin increases expression in the cell membrane.</text>
</comment>
<comment type="alternative products">
    <event type="alternative splicing"/>
    <isoform>
        <id>Q62668-1</id>
        <name>1</name>
        <name>UT-A1</name>
        <sequence type="displayed"/>
    </isoform>
    <isoform>
        <id>Q62668-2</id>
        <name>2</name>
        <name>UT-A2</name>
        <sequence type="described" ref="VSP_031172"/>
    </isoform>
    <isoform>
        <id>Q62668-3</id>
        <name>3</name>
        <name>UT-A3</name>
        <sequence type="described" ref="VSP_031174"/>
    </isoform>
    <isoform>
        <id>Q62668-4</id>
        <name>4</name>
        <name>UT-A4</name>
        <sequence type="described" ref="VSP_031173"/>
    </isoform>
</comment>
<comment type="tissue specificity">
    <molecule>Isoform 1</molecule>
    <text evidence="6 9">Expressed in the inner medulla of the kidney.</text>
</comment>
<comment type="tissue specificity">
    <molecule>Isoform 2</molecule>
    <text evidence="8">Expressed in the inner medulla of the kidney.</text>
</comment>
<comment type="tissue specificity">
    <molecule>Isoform 3</molecule>
    <text evidence="3 5">Expressed in both the inner and outer renal medulla of the kidney.</text>
</comment>
<comment type="tissue specificity">
    <molecule>Isoform 4</molecule>
    <text evidence="3">Expressed in both the inner and outer renal medulla of the kidney.</text>
</comment>
<comment type="induction">
    <molecule>Isoform 2</molecule>
    <text evidence="8">Induced by dehydration.</text>
</comment>
<comment type="similarity">
    <text evidence="13">Belongs to the urea transporter family.</text>
</comment>
<comment type="caution">
    <text evidence="13">It is uncertain whether Met-1 or Met-9 is the initiator.</text>
</comment>
<protein>
    <recommendedName>
        <fullName>Urea transporter 2</fullName>
    </recommendedName>
    <alternativeName>
        <fullName>Solute carrier family 14 member 2</fullName>
    </alternativeName>
    <alternativeName>
        <fullName>Urea transporter, kidney</fullName>
    </alternativeName>
</protein>
<sequence>MSDHPLKEMSDNNRSPPLPEPLSSRYKLYESELSSPTWPSSSQDTHPALPLLEMPEEKDLRSSDEDSHIVKIEKPNERSKRRESELPRRASAGRGAFSLFQAVSYLTGDMKECKNWLKDKPLVLQFLDWVLRGAAQVMFVNNPLSGLIIFIGLLIQNPWWTIAGALGTVVSTLAALALSQDRSAIASGLHGYNGMLVGLLVAVFSEKLDYYWWLLFPVTFASMACPVISSALSTVFAKWDLPVFTLPFNIALTLYLAATGHYNLFFPTTLVKPASSAPNITWSEIEMPLLLQTIPVGVGQVYGCDNPWTGGVILVALFISSPLICLHAAIGSIVGLLAALTVATPFETIYTGLWSYNCVLSCVAIGGMFYVLTWQTHLLALVCALFCAYTGAALSNMMAVVGVPPGTWAFCLSTLTFLLLTSNNPGIHKLPLSKVTYPEANRIYFLTAKRSDEQKPPNGGGGEQSHGGGQRKAEEGSETVFPRRKSVFHIEWSSIRRRSKVFGKSEHQERQTKEPLPYLYRKPTVELLDLNTMEESSEIKVETNTTRTTWIQSSMIAGGKRVSKALSYITGEMKECGEGLKDKSPVFQFLDWVLRGTSQVMFVNNPLSGILIVLGLFVQNPWWAISGCLGTIMSTLTALILSQDKSAIAAGLHGYNGVLVGLLMAVFSDKGNYYWWLLLPVIVMSMTCPILSSALSTVFSKWDLPVFTLPFNIAVTLYLAATGHYNLFFPTKLLQPAVTTPNITWSDVQVPLLLRAIPVGIGQVYGCDNPWTGGIFLVALFVSSPLICLHAAIGSTIGMLAALSIATPFDSIYFGLCGFNSTLACIAIGGMFYVITWQTHLLAIACALFAAYLGAALANMLSVFGLPPCTWPFCLSALTFLLLTTNNPGIYKLPLSKVTYPEANRIYFLSQEKNRRASMITKYQAYDVS</sequence>
<evidence type="ECO:0000255" key="1"/>
<evidence type="ECO:0000256" key="2">
    <source>
        <dbReference type="SAM" id="MobiDB-lite"/>
    </source>
</evidence>
<evidence type="ECO:0000269" key="3">
    <source>
    </source>
</evidence>
<evidence type="ECO:0000269" key="4">
    <source>
    </source>
</evidence>
<evidence type="ECO:0000269" key="5">
    <source>
    </source>
</evidence>
<evidence type="ECO:0000269" key="6">
    <source>
    </source>
</evidence>
<evidence type="ECO:0000269" key="7">
    <source>
    </source>
</evidence>
<evidence type="ECO:0000269" key="8">
    <source>
    </source>
</evidence>
<evidence type="ECO:0000269" key="9">
    <source>
    </source>
</evidence>
<evidence type="ECO:0000303" key="10">
    <source>
    </source>
</evidence>
<evidence type="ECO:0000303" key="11">
    <source>
    </source>
</evidence>
<evidence type="ECO:0000303" key="12">
    <source>
    </source>
</evidence>
<evidence type="ECO:0000305" key="13"/>
<evidence type="ECO:0007744" key="14">
    <source>
    </source>
</evidence>
<organism>
    <name type="scientific">Rattus norvegicus</name>
    <name type="common">Rat</name>
    <dbReference type="NCBI Taxonomy" id="10116"/>
    <lineage>
        <taxon>Eukaryota</taxon>
        <taxon>Metazoa</taxon>
        <taxon>Chordata</taxon>
        <taxon>Craniata</taxon>
        <taxon>Vertebrata</taxon>
        <taxon>Euteleostomi</taxon>
        <taxon>Mammalia</taxon>
        <taxon>Eutheria</taxon>
        <taxon>Euarchontoglires</taxon>
        <taxon>Glires</taxon>
        <taxon>Rodentia</taxon>
        <taxon>Myomorpha</taxon>
        <taxon>Muroidea</taxon>
        <taxon>Muridae</taxon>
        <taxon>Murinae</taxon>
        <taxon>Rattus</taxon>
    </lineage>
</organism>
<accession>Q62668</accession>
<accession>Q9R1Y7</accession>
<accession>Q9WTT8</accession>
<accession>Q9Z2R3</accession>
<dbReference type="EMBL" id="U09957">
    <property type="protein sequence ID" value="AAA84392.1"/>
    <property type="molecule type" value="mRNA"/>
</dbReference>
<dbReference type="EMBL" id="U77971">
    <property type="protein sequence ID" value="AAB50197.1"/>
    <property type="molecule type" value="mRNA"/>
</dbReference>
<dbReference type="EMBL" id="AF041788">
    <property type="protein sequence ID" value="AAD23098.1"/>
    <property type="molecule type" value="mRNA"/>
</dbReference>
<dbReference type="EMBL" id="AF042167">
    <property type="protein sequence ID" value="AAD23099.1"/>
    <property type="molecule type" value="mRNA"/>
</dbReference>
<dbReference type="EMBL" id="AF031642">
    <property type="protein sequence ID" value="AAD01938.1"/>
    <property type="molecule type" value="mRNA"/>
</dbReference>
<dbReference type="RefSeq" id="NP_001103740.1">
    <molecule id="Q62668-2"/>
    <property type="nucleotide sequence ID" value="NM_001110270.2"/>
</dbReference>
<dbReference type="RefSeq" id="NP_062220.2">
    <property type="nucleotide sequence ID" value="NM_019347.2"/>
</dbReference>
<dbReference type="RefSeq" id="NP_808877.2">
    <property type="nucleotide sequence ID" value="NM_177962.3"/>
</dbReference>
<dbReference type="SMR" id="Q62668"/>
<dbReference type="BioGRID" id="248522">
    <property type="interactions" value="2"/>
</dbReference>
<dbReference type="FunCoup" id="Q62668">
    <property type="interactions" value="23"/>
</dbReference>
<dbReference type="IntAct" id="Q62668">
    <property type="interactions" value="5"/>
</dbReference>
<dbReference type="STRING" id="10116.ENSRNOP00000073854"/>
<dbReference type="BindingDB" id="Q62668"/>
<dbReference type="ChEMBL" id="CHEMBL3739246"/>
<dbReference type="GuidetoPHARMACOLOGY" id="983"/>
<dbReference type="TCDB" id="1.A.28.1.1">
    <property type="family name" value="the urea transporter (ut) family"/>
</dbReference>
<dbReference type="GlyCosmos" id="Q62668">
    <property type="glycosylation" value="1 site, No reported glycans"/>
</dbReference>
<dbReference type="GlyGen" id="Q62668">
    <property type="glycosylation" value="1 site"/>
</dbReference>
<dbReference type="iPTMnet" id="Q62668"/>
<dbReference type="PhosphoSitePlus" id="Q62668"/>
<dbReference type="PaxDb" id="10116-ENSRNOP00000022417"/>
<dbReference type="GeneID" id="54302"/>
<dbReference type="KEGG" id="rno:54302"/>
<dbReference type="AGR" id="RGD:3689"/>
<dbReference type="AGR" id="RGD:69068"/>
<dbReference type="CTD" id="8170"/>
<dbReference type="RGD" id="3689">
    <property type="gene designation" value="Slc14a2"/>
</dbReference>
<dbReference type="VEuPathDB" id="HostDB:ENSRNOG00000061714"/>
<dbReference type="eggNOG" id="ENOG502QWSG">
    <property type="taxonomic scope" value="Eukaryota"/>
</dbReference>
<dbReference type="InParanoid" id="Q62668"/>
<dbReference type="OrthoDB" id="52160at9989"/>
<dbReference type="PhylomeDB" id="Q62668"/>
<dbReference type="Reactome" id="R-RNO-425366">
    <property type="pathway name" value="Transport of bile salts and organic acids, metal ions and amine compounds"/>
</dbReference>
<dbReference type="PRO" id="PR:Q62668"/>
<dbReference type="Proteomes" id="UP000002494">
    <property type="component" value="Chromosome 18"/>
</dbReference>
<dbReference type="Bgee" id="ENSRNOG00000056021">
    <property type="expression patterns" value="Expressed in adult mammalian kidney and 5 other cell types or tissues"/>
</dbReference>
<dbReference type="GO" id="GO:0016324">
    <property type="term" value="C:apical plasma membrane"/>
    <property type="evidence" value="ECO:0000314"/>
    <property type="project" value="UniProtKB"/>
</dbReference>
<dbReference type="GO" id="GO:0016323">
    <property type="term" value="C:basolateral plasma membrane"/>
    <property type="evidence" value="ECO:0000266"/>
    <property type="project" value="RGD"/>
</dbReference>
<dbReference type="GO" id="GO:0005886">
    <property type="term" value="C:plasma membrane"/>
    <property type="evidence" value="ECO:0000314"/>
    <property type="project" value="UniProtKB"/>
</dbReference>
<dbReference type="GO" id="GO:0050839">
    <property type="term" value="F:cell adhesion molecule binding"/>
    <property type="evidence" value="ECO:0000266"/>
    <property type="project" value="RGD"/>
</dbReference>
<dbReference type="GO" id="GO:0015204">
    <property type="term" value="F:urea transmembrane transporter activity"/>
    <property type="evidence" value="ECO:0000314"/>
    <property type="project" value="UniProtKB"/>
</dbReference>
<dbReference type="GO" id="GO:0071918">
    <property type="term" value="P:urea transmembrane transport"/>
    <property type="evidence" value="ECO:0000318"/>
    <property type="project" value="GO_Central"/>
</dbReference>
<dbReference type="GO" id="GO:0015840">
    <property type="term" value="P:urea transport"/>
    <property type="evidence" value="ECO:0000314"/>
    <property type="project" value="RGD"/>
</dbReference>
<dbReference type="FunFam" id="1.10.3430.10:FF:000002">
    <property type="entry name" value="urea transporter 2"/>
    <property type="match status" value="2"/>
</dbReference>
<dbReference type="Gene3D" id="1.10.3430.10">
    <property type="entry name" value="Ammonium transporter AmtB like domains"/>
    <property type="match status" value="2"/>
</dbReference>
<dbReference type="InterPro" id="IPR029020">
    <property type="entry name" value="Ammonium/urea_transptr"/>
</dbReference>
<dbReference type="InterPro" id="IPR004937">
    <property type="entry name" value="Urea_transporter"/>
</dbReference>
<dbReference type="PANTHER" id="PTHR10464">
    <property type="entry name" value="UREA TRANSPORTER"/>
    <property type="match status" value="1"/>
</dbReference>
<dbReference type="PANTHER" id="PTHR10464:SF6">
    <property type="entry name" value="UREA TRANSPORTER 2"/>
    <property type="match status" value="1"/>
</dbReference>
<dbReference type="Pfam" id="PF03253">
    <property type="entry name" value="UT"/>
    <property type="match status" value="2"/>
</dbReference>
<gene>
    <name type="primary">Slc14a2</name>
    <name type="synonym">Ut2</name>
</gene>
<proteinExistence type="evidence at protein level"/>
<keyword id="KW-0025">Alternative splicing</keyword>
<keyword id="KW-1003">Cell membrane</keyword>
<keyword id="KW-0325">Glycoprotein</keyword>
<keyword id="KW-0472">Membrane</keyword>
<keyword id="KW-0597">Phosphoprotein</keyword>
<keyword id="KW-1185">Reference proteome</keyword>
<keyword id="KW-0812">Transmembrane</keyword>
<keyword id="KW-1133">Transmembrane helix</keyword>
<keyword id="KW-0813">Transport</keyword>
<reference key="1">
    <citation type="journal article" date="1995" name="J. Clin. Invest.">
        <title>Cloning and regulation of expression of the rat kidney urea transporter (rUT2).</title>
        <authorList>
            <person name="Smith C.P."/>
            <person name="Lee W.-S."/>
            <person name="Martial S."/>
            <person name="Knepper M.A."/>
            <person name="You G."/>
            <person name="Sands J.M."/>
            <person name="Hediger M.A."/>
        </authorList>
    </citation>
    <scope>NUCLEOTIDE SEQUENCE [MRNA] (ISOFORM 2)</scope>
    <scope>FUNCTION (ISOFORM 2)</scope>
    <scope>TRANSPORTER ACTIVITY (ISOFORM 2)</scope>
    <scope>TISSUE SPECIFICITY (ISOFORM 2)</scope>
    <scope>INDUCTION(ISOFORM 2)</scope>
    <source>
        <strain>Sprague-Dawley</strain>
        <tissue>Kidney</tissue>
    </source>
</reference>
<reference key="2">
    <citation type="journal article" date="1996" name="J. Clin. Invest.">
        <title>Molecular cloning and characterization of the vasopressin-regulated urea transporter of rat kidney collecting ducts.</title>
        <authorList>
            <person name="Shayakul C."/>
            <person name="Steel A."/>
            <person name="Hediger M.A."/>
        </authorList>
    </citation>
    <scope>NUCLEOTIDE SEQUENCE [MRNA] (ISOFORM 1)</scope>
    <scope>FUNCTION (ISOFORM 1)</scope>
    <scope>TRANSPORTER ACTIVITY (ISOFORM 1)</scope>
    <scope>TISSUE SPECIFICITY (ISOFORM 1)</scope>
    <scope>ACTIVITY REGULATION (ISOFORM 1)</scope>
    <source>
        <strain>Sprague-Dawley</strain>
        <tissue>Kidney inner medulla</tissue>
    </source>
</reference>
<reference key="3">
    <citation type="journal article" date="1999" name="J. Am. Soc. Nephrol.">
        <title>Cloning and characterization of two new isoforms of the rat kidney urea transporter: UT-A3 and UT-A4.</title>
        <authorList>
            <person name="Karakashian A."/>
            <person name="Timmer R.T."/>
            <person name="Klein J.D."/>
            <person name="Gunn R.B."/>
            <person name="Sands J.M."/>
            <person name="Bagnasco S.M."/>
        </authorList>
    </citation>
    <scope>NUCLEOTIDE SEQUENCE [MRNA] (ISOFORMS 3 AND 4)</scope>
    <scope>FUNCTION (ISOFORMS 3 AND 4)</scope>
    <scope>TRANSPORTER ACTIVITY (ISOFORMS 3 AND 4)</scope>
    <scope>ACTIVITY REGULATION (ISOFORMS 3 AND 4)</scope>
    <scope>TISSUE SPECIFICITY (ISOFORMS 3 AND 4)</scope>
    <source>
        <strain>Sprague-Dawley</strain>
        <tissue>Kidney inner medulla</tissue>
    </source>
</reference>
<reference key="4">
    <citation type="journal article" date="2000" name="Am. J. Physiol.">
        <title>Molecular characterization of a novel UT-A urea transporter isoform (UT-A5) in testis.</title>
        <authorList>
            <person name="Fenton R.A."/>
            <person name="Howorth A."/>
            <person name="Cooper G.J."/>
            <person name="Meccariello R."/>
            <person name="Morris I.D."/>
            <person name="Smith C.P."/>
        </authorList>
    </citation>
    <scope>FUNCTION (ISOFORM 2)</scope>
    <scope>TRANSPORTER ACTIVITY (ISOFORM 2)</scope>
    <scope>ACTIVITY REGULATION (ISOFORM 2)</scope>
</reference>
<reference key="5">
    <citation type="journal article" date="2001" name="Am. J. Physiol.">
        <title>Molecular characterization of a novel urea transporter from kidney inner medullary collecting ducts.</title>
        <authorList>
            <person name="Shayakul C."/>
            <person name="Tsukaguchi H."/>
            <person name="Berger U.V."/>
            <person name="Hediger M.A."/>
        </authorList>
    </citation>
    <scope>NUCLEOTIDE SEQUENCE [MRNA] (ISOFORM 3)</scope>
    <scope>FUNCTION (ISOFORM 3)</scope>
    <scope>TRANSPORTER ACTIVITY (ISOFORM 3)</scope>
    <scope>ACTIVITY REGULATION (ISOFORM 3)</scope>
    <scope>TISSUE SPECIFICITY (ISOFORM 3)</scope>
    <source>
        <strain>Sprague-Dawley</strain>
        <tissue>Kidney</tissue>
    </source>
</reference>
<reference key="6">
    <citation type="journal article" date="2006" name="J. Am. Soc. Nephrol.">
        <title>Vasopressin increases plasma membrane accumulation of urea transporter UT-A1 in rat inner medullary collecting ducts.</title>
        <authorList>
            <person name="Klein J.D."/>
            <person name="Froehlich O."/>
            <person name="Blount M.A."/>
            <person name="Martin C.F."/>
            <person name="Smith T.D."/>
            <person name="Sands J.M."/>
        </authorList>
    </citation>
    <scope>FUNCTION (ISOFORM 1)</scope>
    <scope>TRANSPORTER ACTIVITY (ISOFORM 1)</scope>
    <scope>ACTIVITY REGULATION (ISOFORM 1)</scope>
    <scope>SUBCELLULAR LOCATION (ISOFORM 1)</scope>
    <scope>TISSUE SPECIFICITY (ISOFORM 1)</scope>
</reference>
<reference key="7">
    <citation type="journal article" date="2006" name="Proc. Natl. Acad. Sci. U.S.A.">
        <title>Quantitative phosphoproteomics of vasopressin-sensitive renal cells: regulation of aquaporin-2 phosphorylation at two sites.</title>
        <authorList>
            <person name="Hoffert J.D."/>
            <person name="Pisitkun T."/>
            <person name="Wang G."/>
            <person name="Shen R.-F."/>
            <person name="Knepper M.A."/>
        </authorList>
    </citation>
    <scope>PHOSPHORYLATION [LARGE SCALE ANALYSIS] AT SER-486</scope>
    <scope>IDENTIFICATION BY MASS SPECTROMETRY [LARGE SCALE ANALYSIS]</scope>
</reference>
<reference key="8">
    <citation type="journal article" date="2007" name="J. Biol. Chem.">
        <title>The UT-A1 urea transporter interacts with snapin, a SNARE-associated protein.</title>
        <authorList>
            <person name="Mistry A.C."/>
            <person name="Mallick R."/>
            <person name="Froehlich O."/>
            <person name="Klein J.D."/>
            <person name="Rehm A."/>
            <person name="Chen G."/>
            <person name="Sands J.M."/>
        </authorList>
    </citation>
    <scope>INTERACTION WITH SNAPIN (ISOFORM 1)</scope>
</reference>
<feature type="chain" id="PRO_0000065741" description="Urea transporter 2">
    <location>
        <begin position="1"/>
        <end position="929"/>
    </location>
</feature>
<feature type="transmembrane region" description="Helical" evidence="1">
    <location>
        <begin position="133"/>
        <end position="155"/>
    </location>
</feature>
<feature type="transmembrane region" description="Helical" evidence="1">
    <location>
        <begin position="162"/>
        <end position="179"/>
    </location>
</feature>
<feature type="transmembrane region" description="Helical" evidence="1">
    <location>
        <begin position="184"/>
        <end position="204"/>
    </location>
</feature>
<feature type="transmembrane region" description="Helical" evidence="1">
    <location>
        <begin position="212"/>
        <end position="232"/>
    </location>
</feature>
<feature type="transmembrane region" description="Helical" evidence="1">
    <location>
        <begin position="241"/>
        <end position="261"/>
    </location>
</feature>
<feature type="transmembrane region" description="Helical" evidence="1">
    <location>
        <begin position="310"/>
        <end position="330"/>
    </location>
</feature>
<feature type="transmembrane region" description="Helical" evidence="1">
    <location>
        <begin position="349"/>
        <end position="371"/>
    </location>
</feature>
<feature type="transmembrane region" description="Helical" evidence="1">
    <location>
        <begin position="378"/>
        <end position="399"/>
    </location>
</feature>
<feature type="transmembrane region" description="Helical" evidence="1">
    <location>
        <begin position="400"/>
        <end position="420"/>
    </location>
</feature>
<feature type="transmembrane region" description="Helical" evidence="1">
    <location>
        <begin position="609"/>
        <end position="629"/>
    </location>
</feature>
<feature type="transmembrane region" description="Helical" evidence="1">
    <location>
        <begin position="647"/>
        <end position="667"/>
    </location>
</feature>
<feature type="transmembrane region" description="Helical" evidence="1">
    <location>
        <begin position="675"/>
        <end position="695"/>
    </location>
</feature>
<feature type="transmembrane region" description="Helical" evidence="1">
    <location>
        <begin position="704"/>
        <end position="724"/>
    </location>
</feature>
<feature type="transmembrane region" description="Helical" evidence="1">
    <location>
        <begin position="773"/>
        <end position="793"/>
    </location>
</feature>
<feature type="transmembrane region" description="Helical" evidence="1">
    <location>
        <begin position="812"/>
        <end position="832"/>
    </location>
</feature>
<feature type="transmembrane region" description="Helical" evidence="1">
    <location>
        <begin position="841"/>
        <end position="861"/>
    </location>
</feature>
<feature type="transmembrane region" description="Helical" evidence="1">
    <location>
        <begin position="863"/>
        <end position="883"/>
    </location>
</feature>
<feature type="region of interest" description="Disordered" evidence="2">
    <location>
        <begin position="1"/>
        <end position="89"/>
    </location>
</feature>
<feature type="region of interest" description="Disordered" evidence="2">
    <location>
        <begin position="451"/>
        <end position="480"/>
    </location>
</feature>
<feature type="compositionally biased region" description="Basic and acidic residues" evidence="2">
    <location>
        <begin position="1"/>
        <end position="11"/>
    </location>
</feature>
<feature type="compositionally biased region" description="Low complexity" evidence="2">
    <location>
        <begin position="31"/>
        <end position="42"/>
    </location>
</feature>
<feature type="compositionally biased region" description="Basic and acidic residues" evidence="2">
    <location>
        <begin position="55"/>
        <end position="88"/>
    </location>
</feature>
<feature type="compositionally biased region" description="Gly residues" evidence="2">
    <location>
        <begin position="458"/>
        <end position="470"/>
    </location>
</feature>
<feature type="modified residue" description="Phosphoserine" evidence="14">
    <location>
        <position position="486"/>
    </location>
</feature>
<feature type="glycosylation site" description="N-linked (GlcNAc...) asparagine" evidence="1">
    <location>
        <position position="742"/>
    </location>
</feature>
<feature type="splice variant" id="VSP_031172" description="In isoform 2." evidence="12">
    <location>
        <begin position="1"/>
        <end position="532"/>
    </location>
</feature>
<feature type="splice variant" id="VSP_031173" description="In isoform 4." evidence="10">
    <location>
        <begin position="252"/>
        <end position="714"/>
    </location>
</feature>
<feature type="splice variant" id="VSP_031174" description="In isoform 3." evidence="10 11">
    <location>
        <begin position="461"/>
        <end position="929"/>
    </location>
</feature>
<feature type="sequence conflict" description="In Ref. 3; AAD23098/AAD23099." evidence="13" ref="3">
    <original>P</original>
    <variation>L</variation>
    <location>
        <position position="17"/>
    </location>
</feature>
<feature type="sequence conflict" description="In Ref. 3; AAD23098/AAD23099." evidence="13" ref="3">
    <original>A</original>
    <variation>G</variation>
    <location>
        <position position="96"/>
    </location>
</feature>
<feature type="sequence conflict" description="In Ref. 3; AAD23098 and 5; AAD01938." evidence="13" ref="3 5">
    <original>G</original>
    <variation>D</variation>
    <location>
        <position position="460"/>
    </location>
</feature>
<feature type="sequence conflict" description="In Ref. 3; AAD23099." evidence="13" ref="3">
    <original>L</original>
    <variation>P</variation>
    <location>
        <position position="780"/>
    </location>
</feature>